<feature type="initiator methionine" description="Removed" evidence="4">
    <location>
        <position position="1"/>
    </location>
</feature>
<feature type="chain" id="PRO_0000056496" description="Aldehyde dehydrogenase family 7 member A1">
    <location>
        <begin position="2"/>
        <end position="494"/>
    </location>
</feature>
<feature type="active site" description="Proton acceptor" evidence="3">
    <location>
        <position position="269"/>
    </location>
</feature>
<feature type="active site" description="Nucleophile" evidence="3">
    <location>
        <position position="303"/>
    </location>
</feature>
<feature type="binding site" evidence="1">
    <location>
        <begin position="247"/>
        <end position="252"/>
    </location>
    <ligand>
        <name>NAD(+)</name>
        <dbReference type="ChEBI" id="CHEBI:57540"/>
    </ligand>
</feature>
<feature type="site" description="Transition state stabilizer" evidence="1">
    <location>
        <position position="168"/>
    </location>
</feature>
<keyword id="KW-0903">Direct protein sequencing</keyword>
<keyword id="KW-0520">NAD</keyword>
<keyword id="KW-0560">Oxidoreductase</keyword>
<keyword id="KW-0346">Stress response</keyword>
<gene>
    <name type="primary">BTG-26</name>
</gene>
<dbReference type="EC" id="1.2.1.3"/>
<dbReference type="EMBL" id="S77096">
    <property type="protein sequence ID" value="AAB33843.1"/>
    <property type="molecule type" value="Genomic_DNA"/>
</dbReference>
<dbReference type="PIR" id="S53503">
    <property type="entry name" value="S53503"/>
</dbReference>
<dbReference type="SMR" id="Q41247"/>
<dbReference type="GO" id="GO:0004029">
    <property type="term" value="F:aldehyde dehydrogenase (NAD+) activity"/>
    <property type="evidence" value="ECO:0007669"/>
    <property type="project" value="UniProtKB-EC"/>
</dbReference>
<dbReference type="CDD" id="cd07130">
    <property type="entry name" value="ALDH_F7_AASADH"/>
    <property type="match status" value="1"/>
</dbReference>
<dbReference type="FunFam" id="3.40.309.10:FF:000018">
    <property type="entry name" value="Alpha-aminoadipic semialdehyde dehydrogenase"/>
    <property type="match status" value="1"/>
</dbReference>
<dbReference type="Gene3D" id="3.40.605.10">
    <property type="entry name" value="Aldehyde Dehydrogenase, Chain A, domain 1"/>
    <property type="match status" value="1"/>
</dbReference>
<dbReference type="Gene3D" id="3.40.309.10">
    <property type="entry name" value="Aldehyde Dehydrogenase, Chain A, domain 2"/>
    <property type="match status" value="1"/>
</dbReference>
<dbReference type="InterPro" id="IPR016161">
    <property type="entry name" value="Ald_DH/histidinol_DH"/>
</dbReference>
<dbReference type="InterPro" id="IPR016163">
    <property type="entry name" value="Ald_DH_C"/>
</dbReference>
<dbReference type="InterPro" id="IPR029510">
    <property type="entry name" value="Ald_DH_CS_GLU"/>
</dbReference>
<dbReference type="InterPro" id="IPR016162">
    <property type="entry name" value="Ald_DH_N"/>
</dbReference>
<dbReference type="InterPro" id="IPR015590">
    <property type="entry name" value="Aldehyde_DH_dom"/>
</dbReference>
<dbReference type="InterPro" id="IPR044638">
    <property type="entry name" value="ALDH7A1-like"/>
</dbReference>
<dbReference type="PANTHER" id="PTHR43521">
    <property type="entry name" value="ALPHA-AMINOADIPIC SEMIALDEHYDE DEHYDROGENASE"/>
    <property type="match status" value="1"/>
</dbReference>
<dbReference type="PANTHER" id="PTHR43521:SF1">
    <property type="entry name" value="ALPHA-AMINOADIPIC SEMIALDEHYDE DEHYDROGENASE"/>
    <property type="match status" value="1"/>
</dbReference>
<dbReference type="Pfam" id="PF00171">
    <property type="entry name" value="Aldedh"/>
    <property type="match status" value="1"/>
</dbReference>
<dbReference type="SUPFAM" id="SSF53720">
    <property type="entry name" value="ALDH-like"/>
    <property type="match status" value="1"/>
</dbReference>
<dbReference type="PROSITE" id="PS00687">
    <property type="entry name" value="ALDEHYDE_DEHYDR_GLU"/>
    <property type="match status" value="1"/>
</dbReference>
<comment type="catalytic activity">
    <reaction>
        <text>an aldehyde + NAD(+) + H2O = a carboxylate + NADH + 2 H(+)</text>
        <dbReference type="Rhea" id="RHEA:16185"/>
        <dbReference type="ChEBI" id="CHEBI:15377"/>
        <dbReference type="ChEBI" id="CHEBI:15378"/>
        <dbReference type="ChEBI" id="CHEBI:17478"/>
        <dbReference type="ChEBI" id="CHEBI:29067"/>
        <dbReference type="ChEBI" id="CHEBI:57540"/>
        <dbReference type="ChEBI" id="CHEBI:57945"/>
        <dbReference type="EC" id="1.2.1.3"/>
    </reaction>
</comment>
<comment type="subunit">
    <text evidence="2">Homotetramer.</text>
</comment>
<comment type="induction">
    <text evidence="5">By water stress, low temperature, heat shock, high salt and abscisic acid.</text>
</comment>
<comment type="similarity">
    <text evidence="6">Belongs to the aldehyde dehydrogenase family.</text>
</comment>
<name>AL7A1_BRANA</name>
<organism evidence="7">
    <name type="scientific">Brassica napus</name>
    <name type="common">Rape</name>
    <dbReference type="NCBI Taxonomy" id="3708"/>
    <lineage>
        <taxon>Eukaryota</taxon>
        <taxon>Viridiplantae</taxon>
        <taxon>Streptophyta</taxon>
        <taxon>Embryophyta</taxon>
        <taxon>Tracheophyta</taxon>
        <taxon>Spermatophyta</taxon>
        <taxon>Magnoliopsida</taxon>
        <taxon>eudicotyledons</taxon>
        <taxon>Gunneridae</taxon>
        <taxon>Pentapetalae</taxon>
        <taxon>rosids</taxon>
        <taxon>malvids</taxon>
        <taxon>Brassicales</taxon>
        <taxon>Brassicaceae</taxon>
        <taxon>Brassiceae</taxon>
        <taxon>Brassica</taxon>
    </lineage>
</organism>
<evidence type="ECO:0000250" key="1"/>
<evidence type="ECO:0000250" key="2">
    <source>
        <dbReference type="UniProtKB" id="P83402"/>
    </source>
</evidence>
<evidence type="ECO:0000255" key="3">
    <source>
        <dbReference type="PROSITE-ProRule" id="PRU10007"/>
    </source>
</evidence>
<evidence type="ECO:0000269" key="4">
    <source>
    </source>
</evidence>
<evidence type="ECO:0000269" key="5">
    <source>
    </source>
</evidence>
<evidence type="ECO:0000305" key="6"/>
<evidence type="ECO:0000312" key="7">
    <source>
        <dbReference type="EMBL" id="AAB33843.1"/>
    </source>
</evidence>
<protein>
    <recommendedName>
        <fullName>Aldehyde dehydrogenase family 7 member A1</fullName>
        <ecNumber>1.2.1.3</ecNumber>
    </recommendedName>
    <alternativeName>
        <fullName>Antiquitin-1</fullName>
    </alternativeName>
    <alternativeName>
        <fullName>Brassica turgor-responsive/drought-induced gene 26 protein</fullName>
        <shortName>Btg-26</shortName>
    </alternativeName>
</protein>
<sequence>MGSASKEYEFLSEIGLSSSHNLGNYVGGKWLGNGPLVSTLNPANNQVLPIAQVVEASLEDYEIGLKACEEAAKTWMQVPAPKRGDIVRQIGDALRSKLDYLGRLLSLEMGKILAEGIGEVQEVIDMCDFAVGLSRQLNGSVIPSERPNHMMLEMWNPLGIVGVITAFNFPCAVLGWNACIALVCGNCVVWKGAPTTPLITIAMTKLVAEVLEKNHLPGAIFTAMCGGAEIGEAIAKDTRIPLVSFTGSSKVGLTVQQTVSARSGKTLLELSGNNAIIVMDDADIQLAARSVLFAAVGTAGQRCTTCRRLLLHESVYDKVLEQLLTSYKQVKIGDPLEKGTLLGPLHTPESKKNFEKGIEVIKSQGGKVLTGGKAVEGEGNFVEPTIIEISSDAAVVKEELFAPVLYALKFKTFEEAVAINNSVPQGLSSSIFTRSPDNIFKWIGPMGSDCGIVNVNIPTNGAEIGGAFGGEKATGGGREAGSDSWKQYMRRSTW</sequence>
<proteinExistence type="evidence at protein level"/>
<reference evidence="6" key="1">
    <citation type="journal article" date="1995" name="Plant Mol. Biol.">
        <title>Molecular cloning and expression of a turgor-responsive gene in Brassica napus.</title>
        <authorList>
            <person name="Stroeher V.L."/>
            <person name="Boothe J.G."/>
            <person name="Good A.G."/>
        </authorList>
    </citation>
    <scope>NUCLEOTIDE SEQUENCE [GENOMIC DNA]</scope>
    <scope>INDUCTION</scope>
    <source>
        <strain>cv. Bridger</strain>
        <tissue>Leaf</tissue>
    </source>
</reference>
<reference evidence="6" key="2">
    <citation type="journal article" date="2002" name="FEBS Lett.">
        <title>First purification of the antiquitin protein and demonstration of its enzymatic activity.</title>
        <authorList>
            <person name="Tang W.-K."/>
            <person name="Cheng C.H.K."/>
            <person name="Fong W.-P."/>
        </authorList>
    </citation>
    <scope>PROTEIN SEQUENCE OF 2-16</scope>
</reference>
<accession>Q41247</accession>